<proteinExistence type="evidence at transcript level"/>
<name>ABAH2_ARATH</name>
<evidence type="ECO:0000250" key="1"/>
<evidence type="ECO:0000250" key="2">
    <source>
        <dbReference type="UniProtKB" id="Q949P1"/>
    </source>
</evidence>
<evidence type="ECO:0000255" key="3"/>
<evidence type="ECO:0000269" key="4">
    <source>
    </source>
</evidence>
<evidence type="ECO:0000269" key="5">
    <source>
    </source>
</evidence>
<evidence type="ECO:0000269" key="6">
    <source>
    </source>
</evidence>
<evidence type="ECO:0000305" key="7"/>
<accession>O81077</accession>
<organism>
    <name type="scientific">Arabidopsis thaliana</name>
    <name type="common">Mouse-ear cress</name>
    <dbReference type="NCBI Taxonomy" id="3702"/>
    <lineage>
        <taxon>Eukaryota</taxon>
        <taxon>Viridiplantae</taxon>
        <taxon>Streptophyta</taxon>
        <taxon>Embryophyta</taxon>
        <taxon>Tracheophyta</taxon>
        <taxon>Spermatophyta</taxon>
        <taxon>Magnoliopsida</taxon>
        <taxon>eudicotyledons</taxon>
        <taxon>Gunneridae</taxon>
        <taxon>Pentapetalae</taxon>
        <taxon>rosids</taxon>
        <taxon>malvids</taxon>
        <taxon>Brassicales</taxon>
        <taxon>Brassicaceae</taxon>
        <taxon>Camelineae</taxon>
        <taxon>Arabidopsis</taxon>
    </lineage>
</organism>
<sequence length="482" mass="55176">MQISSSSSSNFFSSLYADEPALITLTIVVVVVVLLFKWWLHWKEQRLRLPPGSMGLPYIGETLRLYTENPNSFFATRQNKYGDIFKTHILGCPCVMISSPEAARMVLVSKAHLFKPTYPPSKERMIGPEALFFHQGPYHSTLKRLVQSSFMPSALRPTVSHIELLVLQTLSSWTSQKSINTLEYMKRYAFDVAIMSAFGDKEEPTTIDVIKLLYQRLERGYNSMPLDLPGTLFHKSMKARIELSEELRKVIEKRRENGREEGGLLGVLLGAKDQKRNGLSDSQIADNIIGVIFAATDTTASVLTWLLKYLHDHPNLLQEVSREQFSIRQKIKKENRRISWEDTRKMPLTTRVIQETLRAASVLSFTFREAVQDVEYDGYLIPKGWKVLPLFRRIHHSSEFFPDPEKFDPSRFEVAPKPYTYMPFGNGVHSCPGSELAKLEMLILLHHLTTSFRWEVIGDEEGIQYGPFPVPKKGLPIRVTPI</sequence>
<gene>
    <name type="primary">CYP707A2</name>
    <name type="ordered locus">At2g29090</name>
    <name type="ORF">T9I4.17</name>
</gene>
<dbReference type="EC" id="1.14.14.137" evidence="2"/>
<dbReference type="EMBL" id="AC005315">
    <property type="protein sequence ID" value="AAC33235.1"/>
    <property type="molecule type" value="Genomic_DNA"/>
</dbReference>
<dbReference type="EMBL" id="CP002685">
    <property type="protein sequence ID" value="AEC08209.1"/>
    <property type="molecule type" value="Genomic_DNA"/>
</dbReference>
<dbReference type="EMBL" id="CP002685">
    <property type="protein sequence ID" value="AEC08210.1"/>
    <property type="molecule type" value="Genomic_DNA"/>
</dbReference>
<dbReference type="EMBL" id="AK230466">
    <property type="protein sequence ID" value="BAF02260.1"/>
    <property type="molecule type" value="mRNA"/>
</dbReference>
<dbReference type="PIR" id="T02739">
    <property type="entry name" value="T02739"/>
</dbReference>
<dbReference type="RefSeq" id="NP_001189629.1">
    <property type="nucleotide sequence ID" value="NM_001202700.1"/>
</dbReference>
<dbReference type="RefSeq" id="NP_180473.1">
    <property type="nucleotide sequence ID" value="NM_128466.4"/>
</dbReference>
<dbReference type="SMR" id="O81077"/>
<dbReference type="BioGRID" id="2807">
    <property type="interactions" value="13"/>
</dbReference>
<dbReference type="FunCoup" id="O81077">
    <property type="interactions" value="217"/>
</dbReference>
<dbReference type="IntAct" id="O81077">
    <property type="interactions" value="13"/>
</dbReference>
<dbReference type="STRING" id="3702.O81077"/>
<dbReference type="PaxDb" id="3702-AT2G29090.1"/>
<dbReference type="EnsemblPlants" id="AT2G29090.1">
    <property type="protein sequence ID" value="AT2G29090.1"/>
    <property type="gene ID" value="AT2G29090"/>
</dbReference>
<dbReference type="EnsemblPlants" id="AT2G29090.2">
    <property type="protein sequence ID" value="AT2G29090.2"/>
    <property type="gene ID" value="AT2G29090"/>
</dbReference>
<dbReference type="GeneID" id="817457"/>
<dbReference type="Gramene" id="AT2G29090.1">
    <property type="protein sequence ID" value="AT2G29090.1"/>
    <property type="gene ID" value="AT2G29090"/>
</dbReference>
<dbReference type="Gramene" id="AT2G29090.2">
    <property type="protein sequence ID" value="AT2G29090.2"/>
    <property type="gene ID" value="AT2G29090"/>
</dbReference>
<dbReference type="KEGG" id="ath:AT2G29090"/>
<dbReference type="Araport" id="AT2G29090"/>
<dbReference type="TAIR" id="AT2G29090">
    <property type="gene designation" value="CYP707A2"/>
</dbReference>
<dbReference type="eggNOG" id="KOG0157">
    <property type="taxonomic scope" value="Eukaryota"/>
</dbReference>
<dbReference type="HOGENOM" id="CLU_001570_15_5_1"/>
<dbReference type="InParanoid" id="O81077"/>
<dbReference type="OMA" id="DDTRQMP"/>
<dbReference type="PhylomeDB" id="O81077"/>
<dbReference type="BioCyc" id="ARA:AT2G29090-MONOMER"/>
<dbReference type="BioCyc" id="MetaCyc:AT2G29090-MONOMER"/>
<dbReference type="BRENDA" id="1.14.14.137">
    <property type="organism ID" value="399"/>
</dbReference>
<dbReference type="UniPathway" id="UPA00093"/>
<dbReference type="PRO" id="PR:O81077"/>
<dbReference type="Proteomes" id="UP000006548">
    <property type="component" value="Chromosome 2"/>
</dbReference>
<dbReference type="ExpressionAtlas" id="O81077">
    <property type="expression patterns" value="baseline and differential"/>
</dbReference>
<dbReference type="GO" id="GO:0016020">
    <property type="term" value="C:membrane"/>
    <property type="evidence" value="ECO:0007669"/>
    <property type="project" value="UniProtKB-SubCell"/>
</dbReference>
<dbReference type="GO" id="GO:0010295">
    <property type="term" value="F:(+)-abscisic acid 8'-hydroxylase activity"/>
    <property type="evidence" value="ECO:0000314"/>
    <property type="project" value="TAIR"/>
</dbReference>
<dbReference type="GO" id="GO:0020037">
    <property type="term" value="F:heme binding"/>
    <property type="evidence" value="ECO:0007669"/>
    <property type="project" value="InterPro"/>
</dbReference>
<dbReference type="GO" id="GO:0005506">
    <property type="term" value="F:iron ion binding"/>
    <property type="evidence" value="ECO:0007669"/>
    <property type="project" value="InterPro"/>
</dbReference>
<dbReference type="GO" id="GO:0046345">
    <property type="term" value="P:abscisic acid catabolic process"/>
    <property type="evidence" value="ECO:0007669"/>
    <property type="project" value="UniProtKB-UniPathway"/>
</dbReference>
<dbReference type="GO" id="GO:0009687">
    <property type="term" value="P:abscisic acid metabolic process"/>
    <property type="evidence" value="ECO:0000315"/>
    <property type="project" value="TAIR"/>
</dbReference>
<dbReference type="GO" id="GO:0048838">
    <property type="term" value="P:release of seed from dormancy"/>
    <property type="evidence" value="ECO:0000315"/>
    <property type="project" value="TAIR"/>
</dbReference>
<dbReference type="GO" id="GO:0010114">
    <property type="term" value="P:response to red light"/>
    <property type="evidence" value="ECO:0000270"/>
    <property type="project" value="TAIR"/>
</dbReference>
<dbReference type="GO" id="GO:0009639">
    <property type="term" value="P:response to red or far red light"/>
    <property type="evidence" value="ECO:0000270"/>
    <property type="project" value="TAIR"/>
</dbReference>
<dbReference type="CDD" id="cd11043">
    <property type="entry name" value="CYP90-like"/>
    <property type="match status" value="1"/>
</dbReference>
<dbReference type="FunFam" id="1.10.630.10:FF:000014">
    <property type="entry name" value="Abscisic acid 8"/>
    <property type="match status" value="1"/>
</dbReference>
<dbReference type="Gene3D" id="1.10.630.10">
    <property type="entry name" value="Cytochrome P450"/>
    <property type="match status" value="1"/>
</dbReference>
<dbReference type="InterPro" id="IPR001128">
    <property type="entry name" value="Cyt_P450"/>
</dbReference>
<dbReference type="InterPro" id="IPR017972">
    <property type="entry name" value="Cyt_P450_CS"/>
</dbReference>
<dbReference type="InterPro" id="IPR002401">
    <property type="entry name" value="Cyt_P450_E_grp-I"/>
</dbReference>
<dbReference type="InterPro" id="IPR036396">
    <property type="entry name" value="Cyt_P450_sf"/>
</dbReference>
<dbReference type="PANTHER" id="PTHR24286:SF220">
    <property type="entry name" value="ABSCISIC ACID 8'-HYDROXYLASE 2"/>
    <property type="match status" value="1"/>
</dbReference>
<dbReference type="PANTHER" id="PTHR24286">
    <property type="entry name" value="CYTOCHROME P450 26"/>
    <property type="match status" value="1"/>
</dbReference>
<dbReference type="Pfam" id="PF00067">
    <property type="entry name" value="p450"/>
    <property type="match status" value="1"/>
</dbReference>
<dbReference type="PRINTS" id="PR00463">
    <property type="entry name" value="EP450I"/>
</dbReference>
<dbReference type="PRINTS" id="PR00385">
    <property type="entry name" value="P450"/>
</dbReference>
<dbReference type="SUPFAM" id="SSF48264">
    <property type="entry name" value="Cytochrome P450"/>
    <property type="match status" value="1"/>
</dbReference>
<dbReference type="PROSITE" id="PS00086">
    <property type="entry name" value="CYTOCHROME_P450"/>
    <property type="match status" value="1"/>
</dbReference>
<comment type="function">
    <text evidence="4 5">Involved in the oxidative degradation of abscisic acid, but not in the isomerization of the produced 8'-hydroxyabscisic acid (8'-OH-ABA) to (-)-phaseic acid (PA). Involved in the control of seed dormancy and germination.</text>
</comment>
<comment type="catalytic activity">
    <reaction evidence="2">
        <text>2-cis-(+)-abscisate + reduced [NADPH--hemoprotein reductase] + O2 = (+)-8'-hydroxyabscisate + oxidized [NADPH--hemoprotein reductase] + H2O + H(+)</text>
        <dbReference type="Rhea" id="RHEA:12897"/>
        <dbReference type="Rhea" id="RHEA-COMP:11964"/>
        <dbReference type="Rhea" id="RHEA-COMP:11965"/>
        <dbReference type="ChEBI" id="CHEBI:15377"/>
        <dbReference type="ChEBI" id="CHEBI:15378"/>
        <dbReference type="ChEBI" id="CHEBI:15379"/>
        <dbReference type="ChEBI" id="CHEBI:37569"/>
        <dbReference type="ChEBI" id="CHEBI:57618"/>
        <dbReference type="ChEBI" id="CHEBI:58210"/>
        <dbReference type="ChEBI" id="CHEBI:58490"/>
        <dbReference type="EC" id="1.14.14.137"/>
    </reaction>
</comment>
<comment type="cofactor">
    <cofactor evidence="1">
        <name>heme</name>
        <dbReference type="ChEBI" id="CHEBI:30413"/>
    </cofactor>
</comment>
<comment type="pathway">
    <text>Plant hormone degradation; abscisic acid degradation.</text>
</comment>
<comment type="subcellular location">
    <subcellularLocation>
        <location evidence="7">Membrane</location>
        <topology evidence="7">Single-pass membrane protein</topology>
    </subcellularLocation>
</comment>
<comment type="tissue specificity">
    <text evidence="4 5">Mainly expressed in dry seeds. Lower expression in rosette leaves, flowers, siliques and stems. Not expressed in roots. Expressed in both endosperm and vascular tissues of embryo during the seed development and in cortex and endodermis in germinating embryo.</text>
</comment>
<comment type="developmental stage">
    <text evidence="4 5">Up-regulated from late-maturation to mature dry seed. Up-regulated immediately after seed imbibition, reaching a maximum at 6 hours and decreasing therafter.</text>
</comment>
<comment type="induction">
    <text evidence="4 6">By abscisic acid, dehydration and rehydration. Expression regulated by phytochrome B.</text>
</comment>
<comment type="disruption phenotype">
    <text evidence="5">Plants show a hyperdormancy phenotype.</text>
</comment>
<comment type="similarity">
    <text evidence="7">Belongs to the cytochrome P450 family.</text>
</comment>
<protein>
    <recommendedName>
        <fullName>Abscisic acid 8'-hydroxylase 2</fullName>
        <shortName>ABA 8'-hydroxylase 2</shortName>
        <ecNumber evidence="2">1.14.14.137</ecNumber>
    </recommendedName>
    <alternativeName>
        <fullName>Cytochrome P450 707A2</fullName>
    </alternativeName>
</protein>
<keyword id="KW-0349">Heme</keyword>
<keyword id="KW-0408">Iron</keyword>
<keyword id="KW-0472">Membrane</keyword>
<keyword id="KW-0479">Metal-binding</keyword>
<keyword id="KW-0503">Monooxygenase</keyword>
<keyword id="KW-0560">Oxidoreductase</keyword>
<keyword id="KW-1185">Reference proteome</keyword>
<keyword id="KW-0346">Stress response</keyword>
<keyword id="KW-0812">Transmembrane</keyword>
<keyword id="KW-1133">Transmembrane helix</keyword>
<reference key="1">
    <citation type="journal article" date="1999" name="Nature">
        <title>Sequence and analysis of chromosome 2 of the plant Arabidopsis thaliana.</title>
        <authorList>
            <person name="Lin X."/>
            <person name="Kaul S."/>
            <person name="Rounsley S.D."/>
            <person name="Shea T.P."/>
            <person name="Benito M.-I."/>
            <person name="Town C.D."/>
            <person name="Fujii C.Y."/>
            <person name="Mason T.M."/>
            <person name="Bowman C.L."/>
            <person name="Barnstead M.E."/>
            <person name="Feldblyum T.V."/>
            <person name="Buell C.R."/>
            <person name="Ketchum K.A."/>
            <person name="Lee J.J."/>
            <person name="Ronning C.M."/>
            <person name="Koo H.L."/>
            <person name="Moffat K.S."/>
            <person name="Cronin L.A."/>
            <person name="Shen M."/>
            <person name="Pai G."/>
            <person name="Van Aken S."/>
            <person name="Umayam L."/>
            <person name="Tallon L.J."/>
            <person name="Gill J.E."/>
            <person name="Adams M.D."/>
            <person name="Carrera A.J."/>
            <person name="Creasy T.H."/>
            <person name="Goodman H.M."/>
            <person name="Somerville C.R."/>
            <person name="Copenhaver G.P."/>
            <person name="Preuss D."/>
            <person name="Nierman W.C."/>
            <person name="White O."/>
            <person name="Eisen J.A."/>
            <person name="Salzberg S.L."/>
            <person name="Fraser C.M."/>
            <person name="Venter J.C."/>
        </authorList>
    </citation>
    <scope>NUCLEOTIDE SEQUENCE [LARGE SCALE GENOMIC DNA]</scope>
    <source>
        <strain>cv. Columbia</strain>
    </source>
</reference>
<reference key="2">
    <citation type="journal article" date="2017" name="Plant J.">
        <title>Araport11: a complete reannotation of the Arabidopsis thaliana reference genome.</title>
        <authorList>
            <person name="Cheng C.Y."/>
            <person name="Krishnakumar V."/>
            <person name="Chan A.P."/>
            <person name="Thibaud-Nissen F."/>
            <person name="Schobel S."/>
            <person name="Town C.D."/>
        </authorList>
    </citation>
    <scope>GENOME REANNOTATION</scope>
    <source>
        <strain>cv. Columbia</strain>
    </source>
</reference>
<reference key="3">
    <citation type="submission" date="2006-07" db="EMBL/GenBank/DDBJ databases">
        <title>Large-scale analysis of RIKEN Arabidopsis full-length (RAFL) cDNAs.</title>
        <authorList>
            <person name="Totoki Y."/>
            <person name="Seki M."/>
            <person name="Ishida J."/>
            <person name="Nakajima M."/>
            <person name="Enju A."/>
            <person name="Kamiya A."/>
            <person name="Narusaka M."/>
            <person name="Shin-i T."/>
            <person name="Nakagawa M."/>
            <person name="Sakamoto N."/>
            <person name="Oishi K."/>
            <person name="Kohara Y."/>
            <person name="Kobayashi M."/>
            <person name="Toyoda A."/>
            <person name="Sakaki Y."/>
            <person name="Sakurai T."/>
            <person name="Iida K."/>
            <person name="Akiyama K."/>
            <person name="Satou M."/>
            <person name="Toyoda T."/>
            <person name="Konagaya A."/>
            <person name="Carninci P."/>
            <person name="Kawai J."/>
            <person name="Hayashizaki Y."/>
            <person name="Shinozaki K."/>
        </authorList>
    </citation>
    <scope>NUCLEOTIDE SEQUENCE [LARGE SCALE MRNA]</scope>
    <source>
        <strain>cv. Columbia</strain>
    </source>
</reference>
<reference key="4">
    <citation type="journal article" date="2004" name="EMBO J.">
        <title>The Arabidopsis cytochrome P450 CYP707A encodes ABA 8'-hydroxylases: key enzymes in ABA catabolism.</title>
        <authorList>
            <person name="Kushiro T."/>
            <person name="Okamoto M."/>
            <person name="Nakabayashi K."/>
            <person name="Yamagishi K."/>
            <person name="Kitamura S."/>
            <person name="Asami T."/>
            <person name="Hirai N."/>
            <person name="Koshiba T."/>
            <person name="Kamiya Y."/>
            <person name="Nambara E."/>
        </authorList>
    </citation>
    <scope>IDENTIFICATION</scope>
    <scope>FUNCTION</scope>
    <scope>TISSUE SPECIFICITY</scope>
    <scope>DEVELOPMENTAL STAGE</scope>
    <scope>INDUCTION</scope>
</reference>
<reference key="5">
    <citation type="journal article" date="2006" name="Plant Physiol.">
        <title>CYP707A1 and CYP707A2, which encode abscisic acid 8'-hydroxylases, are indispensable for proper control of seed dormancy and germination in Arabidopsis.</title>
        <authorList>
            <person name="Okamoto M."/>
            <person name="Kuwahara A."/>
            <person name="Seo M."/>
            <person name="Kushiro T."/>
            <person name="Asami T."/>
            <person name="Hirai N."/>
            <person name="Kamiya Y."/>
            <person name="Koshiba T."/>
            <person name="Nambara E."/>
        </authorList>
    </citation>
    <scope>FUNCTION</scope>
    <scope>DEVELOPMENTAL STAGE</scope>
    <scope>TISSUE SPECIFICITY</scope>
    <scope>DISRUPTION PHENOTYPE</scope>
</reference>
<reference key="6">
    <citation type="journal article" date="2006" name="Plant J.">
        <title>Regulation of hormone metabolism in Arabidopsis seeds: phytochrome regulation of abscisic acid metabolism and abscisic acid regulation of gibberellin metabolism.</title>
        <authorList>
            <person name="Seo M."/>
            <person name="Hanada A."/>
            <person name="Kuwahara A."/>
            <person name="Endo A."/>
            <person name="Okamoto M."/>
            <person name="Yamauchi Y."/>
            <person name="North H."/>
            <person name="Marion-Poll A."/>
            <person name="Sun T.P."/>
            <person name="Koshiba T."/>
            <person name="Kamiya Y."/>
            <person name="Yamaguchi S."/>
            <person name="Nambara E."/>
        </authorList>
    </citation>
    <scope>INDUCTION BY PHYTOCHROME B</scope>
</reference>
<feature type="chain" id="PRO_0000288640" description="Abscisic acid 8'-hydroxylase 2">
    <location>
        <begin position="1"/>
        <end position="482"/>
    </location>
</feature>
<feature type="transmembrane region" description="Helical" evidence="3">
    <location>
        <begin position="20"/>
        <end position="40"/>
    </location>
</feature>
<feature type="binding site" description="axial binding residue" evidence="1">
    <location>
        <position position="431"/>
    </location>
    <ligand>
        <name>heme</name>
        <dbReference type="ChEBI" id="CHEBI:30413"/>
    </ligand>
    <ligandPart>
        <name>Fe</name>
        <dbReference type="ChEBI" id="CHEBI:18248"/>
    </ligandPart>
</feature>